<sequence length="596" mass="64861">MRLLKFVCLLASVAAAKPTPGASHKVIEHLDFVPEGWQMVGAADPAAIIDFWLAIERENPEKLYDTIYDVSTPGRAQYGKHLKREELDDLLRPRAETSESIINWLTNGGVNPQHIRDEGDWVRFSTNVKTAETLMNTRFNVFKDNLNSVSKIRTLEYSVPVAISAHVQMIQPTTLFGRQKPQNSLILNPLTKDLESMSVEEFAASQCRSLVTTACLRELYGLGDRVTQARDDNRIGVSGFLEEYAQYRDLELFLSRFEPSAKGFNFSEGLIAGGKNTQGGPGSSTEANLDMQYVVGLSHKAKVTYYSTAGRGPLIPDLSQPSQASNNNEPYLEQLRYLVKLPKNQLPSVLTTSYGDTEQSLPASYTKATCDLFAQLGTMGVSVIFSSGDTGPGSSCQTNDGKNATRFNPIYPASCPFVTSIGGTVGTGPERAVSFSSGGFSDRFPRPQYQDNAVKDYLKILGNQWSGLFDPNGRAFPDIAAQGSNYAVYDKGRMTGVSGTSASAPAMAAIIAQLNDFRLAKGSPVLGFLNPWIYSKGFSGFTDIVDGGSRGCTGYDIYSGLKAKKVPYASWNATKGWDPVTGFGTPNFQALTKVLP</sequence>
<gene>
    <name type="primary">SED2</name>
    <name type="ORF">ARB_05765</name>
</gene>
<proteinExistence type="evidence at protein level"/>
<reference key="1">
    <citation type="journal article" date="2011" name="Genome Biol.">
        <title>Comparative and functional genomics provide insights into the pathogenicity of dermatophytic fungi.</title>
        <authorList>
            <person name="Burmester A."/>
            <person name="Shelest E."/>
            <person name="Gloeckner G."/>
            <person name="Heddergott C."/>
            <person name="Schindler S."/>
            <person name="Staib P."/>
            <person name="Heidel A."/>
            <person name="Felder M."/>
            <person name="Petzold A."/>
            <person name="Szafranski K."/>
            <person name="Feuermann M."/>
            <person name="Pedruzzi I."/>
            <person name="Priebe S."/>
            <person name="Groth M."/>
            <person name="Winkler R."/>
            <person name="Li W."/>
            <person name="Kniemeyer O."/>
            <person name="Schroeckh V."/>
            <person name="Hertweck C."/>
            <person name="Hube B."/>
            <person name="White T.C."/>
            <person name="Platzer M."/>
            <person name="Guthke R."/>
            <person name="Heitman J."/>
            <person name="Woestemeyer J."/>
            <person name="Zipfel P.F."/>
            <person name="Monod M."/>
            <person name="Brakhage A.A."/>
        </authorList>
    </citation>
    <scope>NUCLEOTIDE SEQUENCE [LARGE SCALE GENOMIC DNA]</scope>
    <scope>IDENTIFICATION BY MASS SPECTROMETRY</scope>
    <scope>SUBCELLULAR LOCATION</scope>
    <source>
        <strain>ATCC MYA-4681 / CBS 112371</strain>
    </source>
</reference>
<comment type="function">
    <text evidence="1">Secreted tripeptidyl-peptidase which degrades proteins at acidic pHs and is involved in virulence.</text>
</comment>
<comment type="catalytic activity">
    <reaction>
        <text>Release of an N-terminal tripeptide from a polypeptide.</text>
        <dbReference type="EC" id="3.4.14.10"/>
    </reaction>
</comment>
<comment type="cofactor">
    <cofactor evidence="1">
        <name>Ca(2+)</name>
        <dbReference type="ChEBI" id="CHEBI:29108"/>
    </cofactor>
    <text evidence="1">Binds 1 Ca(2+) ion per subunit.</text>
</comment>
<comment type="subcellular location">
    <subcellularLocation>
        <location evidence="3">Secreted</location>
        <location evidence="3">Extracellular space</location>
    </subcellularLocation>
</comment>
<accession>D4ANG0</accession>
<organism>
    <name type="scientific">Arthroderma benhamiae (strain ATCC MYA-4681 / CBS 112371)</name>
    <name type="common">Trichophyton mentagrophytes</name>
    <dbReference type="NCBI Taxonomy" id="663331"/>
    <lineage>
        <taxon>Eukaryota</taxon>
        <taxon>Fungi</taxon>
        <taxon>Dikarya</taxon>
        <taxon>Ascomycota</taxon>
        <taxon>Pezizomycotina</taxon>
        <taxon>Eurotiomycetes</taxon>
        <taxon>Eurotiomycetidae</taxon>
        <taxon>Onygenales</taxon>
        <taxon>Arthrodermataceae</taxon>
        <taxon>Trichophyton</taxon>
    </lineage>
</organism>
<keyword id="KW-0106">Calcium</keyword>
<keyword id="KW-0325">Glycoprotein</keyword>
<keyword id="KW-0378">Hydrolase</keyword>
<keyword id="KW-0479">Metal-binding</keyword>
<keyword id="KW-0645">Protease</keyword>
<keyword id="KW-1185">Reference proteome</keyword>
<keyword id="KW-0964">Secreted</keyword>
<keyword id="KW-0720">Serine protease</keyword>
<keyword id="KW-0732">Signal</keyword>
<keyword id="KW-0843">Virulence</keyword>
<keyword id="KW-0865">Zymogen</keyword>
<feature type="signal peptide" evidence="2">
    <location>
        <begin position="1"/>
        <end position="16"/>
    </location>
</feature>
<feature type="propeptide" id="PRO_0000397829" description="Removed in mature form" evidence="1">
    <location>
        <begin position="17"/>
        <end position="203"/>
    </location>
</feature>
<feature type="chain" id="PRO_0000397830" description="Probable tripeptidyl-peptidase SED2">
    <location>
        <begin position="204"/>
        <end position="596"/>
    </location>
</feature>
<feature type="domain" description="Peptidase S53">
    <location>
        <begin position="210"/>
        <end position="596"/>
    </location>
</feature>
<feature type="active site" description="Charge relay system" evidence="1">
    <location>
        <position position="286"/>
    </location>
</feature>
<feature type="active site" description="Charge relay system" evidence="1">
    <location>
        <position position="290"/>
    </location>
</feature>
<feature type="active site" description="Charge relay system" evidence="1">
    <location>
        <position position="501"/>
    </location>
</feature>
<feature type="binding site" evidence="1">
    <location>
        <position position="543"/>
    </location>
    <ligand>
        <name>Ca(2+)</name>
        <dbReference type="ChEBI" id="CHEBI:29108"/>
    </ligand>
</feature>
<feature type="binding site" evidence="1">
    <location>
        <position position="544"/>
    </location>
    <ligand>
        <name>Ca(2+)</name>
        <dbReference type="ChEBI" id="CHEBI:29108"/>
    </ligand>
</feature>
<feature type="binding site" evidence="1">
    <location>
        <position position="576"/>
    </location>
    <ligand>
        <name>Ca(2+)</name>
        <dbReference type="ChEBI" id="CHEBI:29108"/>
    </ligand>
</feature>
<feature type="binding site" evidence="1">
    <location>
        <position position="578"/>
    </location>
    <ligand>
        <name>Ca(2+)</name>
        <dbReference type="ChEBI" id="CHEBI:29108"/>
    </ligand>
</feature>
<feature type="glycosylation site" description="N-linked (GlcNAc...) asparagine" evidence="2">
    <location>
        <position position="265"/>
    </location>
</feature>
<feature type="glycosylation site" description="N-linked (GlcNAc...) asparagine" evidence="2">
    <location>
        <position position="403"/>
    </location>
</feature>
<feature type="glycosylation site" description="N-linked (GlcNAc...) asparagine" evidence="2">
    <location>
        <position position="572"/>
    </location>
</feature>
<dbReference type="EC" id="3.4.14.10"/>
<dbReference type="EMBL" id="ABSU01000003">
    <property type="protein sequence ID" value="EFE35721.1"/>
    <property type="molecule type" value="Genomic_DNA"/>
</dbReference>
<dbReference type="RefSeq" id="XP_003016366.1">
    <property type="nucleotide sequence ID" value="XM_003016320.1"/>
</dbReference>
<dbReference type="SMR" id="D4ANG0"/>
<dbReference type="STRING" id="663331.D4ANG0"/>
<dbReference type="GlyCosmos" id="D4ANG0">
    <property type="glycosylation" value="3 sites, No reported glycans"/>
</dbReference>
<dbReference type="GeneID" id="9521849"/>
<dbReference type="KEGG" id="abe:ARB_05765"/>
<dbReference type="eggNOG" id="ENOG502QR6D">
    <property type="taxonomic scope" value="Eukaryota"/>
</dbReference>
<dbReference type="HOGENOM" id="CLU_013783_3_0_1"/>
<dbReference type="OMA" id="KATCDLF"/>
<dbReference type="OrthoDB" id="409122at2759"/>
<dbReference type="Proteomes" id="UP000008866">
    <property type="component" value="Unassembled WGS sequence"/>
</dbReference>
<dbReference type="GO" id="GO:0005576">
    <property type="term" value="C:extracellular region"/>
    <property type="evidence" value="ECO:0007669"/>
    <property type="project" value="UniProtKB-SubCell"/>
</dbReference>
<dbReference type="GO" id="GO:0046872">
    <property type="term" value="F:metal ion binding"/>
    <property type="evidence" value="ECO:0007669"/>
    <property type="project" value="UniProtKB-KW"/>
</dbReference>
<dbReference type="GO" id="GO:0004252">
    <property type="term" value="F:serine-type endopeptidase activity"/>
    <property type="evidence" value="ECO:0007669"/>
    <property type="project" value="InterPro"/>
</dbReference>
<dbReference type="GO" id="GO:0008240">
    <property type="term" value="F:tripeptidyl-peptidase activity"/>
    <property type="evidence" value="ECO:0007669"/>
    <property type="project" value="UniProtKB-EC"/>
</dbReference>
<dbReference type="GO" id="GO:0006508">
    <property type="term" value="P:proteolysis"/>
    <property type="evidence" value="ECO:0007669"/>
    <property type="project" value="UniProtKB-KW"/>
</dbReference>
<dbReference type="CDD" id="cd04056">
    <property type="entry name" value="Peptidases_S53"/>
    <property type="match status" value="1"/>
</dbReference>
<dbReference type="CDD" id="cd11377">
    <property type="entry name" value="Pro-peptidase_S53"/>
    <property type="match status" value="1"/>
</dbReference>
<dbReference type="FunFam" id="3.40.50.200:FF:000015">
    <property type="entry name" value="Tripeptidyl peptidase A"/>
    <property type="match status" value="1"/>
</dbReference>
<dbReference type="Gene3D" id="3.40.50.200">
    <property type="entry name" value="Peptidase S8/S53 domain"/>
    <property type="match status" value="1"/>
</dbReference>
<dbReference type="InterPro" id="IPR000209">
    <property type="entry name" value="Peptidase_S8/S53_dom"/>
</dbReference>
<dbReference type="InterPro" id="IPR036852">
    <property type="entry name" value="Peptidase_S8/S53_dom_sf"/>
</dbReference>
<dbReference type="InterPro" id="IPR023828">
    <property type="entry name" value="Peptidase_S8_Ser-AS"/>
</dbReference>
<dbReference type="InterPro" id="IPR015366">
    <property type="entry name" value="S53_propep"/>
</dbReference>
<dbReference type="InterPro" id="IPR030400">
    <property type="entry name" value="Sedolisin_dom"/>
</dbReference>
<dbReference type="InterPro" id="IPR050819">
    <property type="entry name" value="Tripeptidyl-peptidase_I"/>
</dbReference>
<dbReference type="PANTHER" id="PTHR14218">
    <property type="entry name" value="PROTEASE S8 TRIPEPTIDYL PEPTIDASE I CLN2"/>
    <property type="match status" value="1"/>
</dbReference>
<dbReference type="PANTHER" id="PTHR14218:SF32">
    <property type="entry name" value="TRIPEPTIDYL PEPTIDASE SED3 (AFU_ORTHOLOGUE AFUA_3G08930)"/>
    <property type="match status" value="1"/>
</dbReference>
<dbReference type="Pfam" id="PF00082">
    <property type="entry name" value="Peptidase_S8"/>
    <property type="match status" value="1"/>
</dbReference>
<dbReference type="Pfam" id="PF09286">
    <property type="entry name" value="Pro-kuma_activ"/>
    <property type="match status" value="1"/>
</dbReference>
<dbReference type="SMART" id="SM00944">
    <property type="entry name" value="Pro-kuma_activ"/>
    <property type="match status" value="1"/>
</dbReference>
<dbReference type="SUPFAM" id="SSF54897">
    <property type="entry name" value="Protease propeptides/inhibitors"/>
    <property type="match status" value="1"/>
</dbReference>
<dbReference type="SUPFAM" id="SSF52743">
    <property type="entry name" value="Subtilisin-like"/>
    <property type="match status" value="1"/>
</dbReference>
<dbReference type="PROSITE" id="PS51695">
    <property type="entry name" value="SEDOLISIN"/>
    <property type="match status" value="1"/>
</dbReference>
<name>SED2_ARTBC</name>
<protein>
    <recommendedName>
        <fullName>Probable tripeptidyl-peptidase SED2</fullName>
        <ecNumber>3.4.14.10</ecNumber>
    </recommendedName>
    <alternativeName>
        <fullName>Sedolisin-B</fullName>
    </alternativeName>
</protein>
<evidence type="ECO:0000250" key="1"/>
<evidence type="ECO:0000255" key="2"/>
<evidence type="ECO:0000269" key="3">
    <source>
    </source>
</evidence>